<dbReference type="EMBL" id="U45976">
    <property type="protein sequence ID" value="AAB07762.1"/>
    <property type="molecule type" value="mRNA"/>
</dbReference>
<dbReference type="EMBL" id="AK300275">
    <property type="protein sequence ID" value="BAG62035.1"/>
    <property type="molecule type" value="mRNA"/>
</dbReference>
<dbReference type="EMBL" id="AB210017">
    <property type="protein sequence ID" value="BAE06099.1"/>
    <property type="status" value="ALT_INIT"/>
    <property type="molecule type" value="mRNA"/>
</dbReference>
<dbReference type="EMBL" id="AP000767">
    <property type="status" value="NOT_ANNOTATED_CDS"/>
    <property type="molecule type" value="Genomic_DNA"/>
</dbReference>
<dbReference type="EMBL" id="CH471076">
    <property type="protein sequence ID" value="EAW75120.1"/>
    <property type="molecule type" value="Genomic_DNA"/>
</dbReference>
<dbReference type="EMBL" id="BC048259">
    <property type="protein sequence ID" value="AAH48259.2"/>
    <property type="molecule type" value="mRNA"/>
</dbReference>
<dbReference type="EMBL" id="BC064357">
    <property type="protein sequence ID" value="AAH64357.1"/>
    <property type="molecule type" value="mRNA"/>
</dbReference>
<dbReference type="EMBL" id="BC073961">
    <property type="protein sequence ID" value="AAH73961.1"/>
    <property type="molecule type" value="mRNA"/>
</dbReference>
<dbReference type="EMBL" id="AF060939">
    <property type="protein sequence ID" value="AAC16711.1"/>
    <property type="molecule type" value="mRNA"/>
</dbReference>
<dbReference type="EMBL" id="AF060940">
    <property type="protein sequence ID" value="AAC16712.1"/>
    <property type="molecule type" value="mRNA"/>
</dbReference>
<dbReference type="CCDS" id="CCDS31653.1">
    <molecule id="Q13492-3"/>
</dbReference>
<dbReference type="CCDS" id="CCDS55783.1">
    <molecule id="Q13492-4"/>
</dbReference>
<dbReference type="CCDS" id="CCDS55784.1">
    <molecule id="Q13492-5"/>
</dbReference>
<dbReference type="CCDS" id="CCDS8272.1">
    <molecule id="Q13492-1"/>
</dbReference>
<dbReference type="CCDS" id="CCDS91570.1">
    <molecule id="Q13492-2"/>
</dbReference>
<dbReference type="RefSeq" id="NP_001008660.1">
    <molecule id="Q13492-3"/>
    <property type="nucleotide sequence ID" value="NM_001008660.3"/>
</dbReference>
<dbReference type="RefSeq" id="NP_001193875.1">
    <molecule id="Q13492-5"/>
    <property type="nucleotide sequence ID" value="NM_001206946.2"/>
</dbReference>
<dbReference type="RefSeq" id="NP_001193876.1">
    <molecule id="Q13492-4"/>
    <property type="nucleotide sequence ID" value="NM_001206947.2"/>
</dbReference>
<dbReference type="RefSeq" id="NP_001397963.1">
    <molecule id="Q13492-2"/>
    <property type="nucleotide sequence ID" value="NM_001411034.1"/>
</dbReference>
<dbReference type="RefSeq" id="NP_009097.2">
    <molecule id="Q13492-1"/>
    <property type="nucleotide sequence ID" value="NM_007166.4"/>
</dbReference>
<dbReference type="RefSeq" id="XP_005274388.1">
    <property type="nucleotide sequence ID" value="XM_005274331.2"/>
</dbReference>
<dbReference type="SMR" id="Q13492"/>
<dbReference type="BioGRID" id="113902">
    <property type="interactions" value="279"/>
</dbReference>
<dbReference type="CORUM" id="Q13492"/>
<dbReference type="ELM" id="Q13492"/>
<dbReference type="FunCoup" id="Q13492">
    <property type="interactions" value="3108"/>
</dbReference>
<dbReference type="IntAct" id="Q13492">
    <property type="interactions" value="150"/>
</dbReference>
<dbReference type="MINT" id="Q13492"/>
<dbReference type="STRING" id="9606.ENSP00000377015"/>
<dbReference type="MoonDB" id="Q13492">
    <property type="type" value="Curated"/>
</dbReference>
<dbReference type="MoonProt" id="Q13492"/>
<dbReference type="GlyCosmos" id="Q13492">
    <property type="glycosylation" value="16 sites, 2 glycans"/>
</dbReference>
<dbReference type="GlyGen" id="Q13492">
    <property type="glycosylation" value="28 sites, 2 O-linked glycans (28 sites)"/>
</dbReference>
<dbReference type="iPTMnet" id="Q13492"/>
<dbReference type="MetOSite" id="Q13492"/>
<dbReference type="PhosphoSitePlus" id="Q13492"/>
<dbReference type="SwissPalm" id="Q13492"/>
<dbReference type="BioMuta" id="PICALM"/>
<dbReference type="DMDM" id="116242714"/>
<dbReference type="jPOST" id="Q13492"/>
<dbReference type="MassIVE" id="Q13492"/>
<dbReference type="PaxDb" id="9606-ENSP00000377015"/>
<dbReference type="PeptideAtlas" id="Q13492"/>
<dbReference type="ProteomicsDB" id="22268"/>
<dbReference type="ProteomicsDB" id="28286"/>
<dbReference type="ProteomicsDB" id="59489">
    <molecule id="Q13492-1"/>
</dbReference>
<dbReference type="ProteomicsDB" id="59490">
    <molecule id="Q13492-2"/>
</dbReference>
<dbReference type="ProteomicsDB" id="59491">
    <molecule id="Q13492-3"/>
</dbReference>
<dbReference type="Pumba" id="Q13492"/>
<dbReference type="Antibodypedia" id="17636">
    <property type="antibodies" value="207 antibodies from 34 providers"/>
</dbReference>
<dbReference type="DNASU" id="8301"/>
<dbReference type="Ensembl" id="ENST00000356360.9">
    <molecule id="Q13492-2"/>
    <property type="protein sequence ID" value="ENSP00000348718.5"/>
    <property type="gene ID" value="ENSG00000073921.18"/>
</dbReference>
<dbReference type="Ensembl" id="ENST00000393346.8">
    <molecule id="Q13492-1"/>
    <property type="protein sequence ID" value="ENSP00000377015.3"/>
    <property type="gene ID" value="ENSG00000073921.18"/>
</dbReference>
<dbReference type="Ensembl" id="ENST00000526033.5">
    <molecule id="Q13492-5"/>
    <property type="protein sequence ID" value="ENSP00000433846.1"/>
    <property type="gene ID" value="ENSG00000073921.18"/>
</dbReference>
<dbReference type="Ensembl" id="ENST00000528398.5">
    <molecule id="Q13492-4"/>
    <property type="protein sequence ID" value="ENSP00000434884.1"/>
    <property type="gene ID" value="ENSG00000073921.18"/>
</dbReference>
<dbReference type="Ensembl" id="ENST00000532317.5">
    <molecule id="Q13492-3"/>
    <property type="protein sequence ID" value="ENSP00000436958.1"/>
    <property type="gene ID" value="ENSG00000073921.18"/>
</dbReference>
<dbReference type="GeneID" id="8301"/>
<dbReference type="KEGG" id="hsa:8301"/>
<dbReference type="MANE-Select" id="ENST00000393346.8">
    <property type="protein sequence ID" value="ENSP00000377015.3"/>
    <property type="RefSeq nucleotide sequence ID" value="NM_007166.4"/>
    <property type="RefSeq protein sequence ID" value="NP_009097.2"/>
</dbReference>
<dbReference type="UCSC" id="uc001pbl.4">
    <molecule id="Q13492-1"/>
    <property type="organism name" value="human"/>
</dbReference>
<dbReference type="AGR" id="HGNC:15514"/>
<dbReference type="CTD" id="8301"/>
<dbReference type="DisGeNET" id="8301"/>
<dbReference type="GeneCards" id="PICALM"/>
<dbReference type="HGNC" id="HGNC:15514">
    <property type="gene designation" value="PICALM"/>
</dbReference>
<dbReference type="HPA" id="ENSG00000073921">
    <property type="expression patterns" value="Low tissue specificity"/>
</dbReference>
<dbReference type="MalaCards" id="PICALM"/>
<dbReference type="MIM" id="603025">
    <property type="type" value="gene"/>
</dbReference>
<dbReference type="neXtProt" id="NX_Q13492"/>
<dbReference type="OpenTargets" id="ENSG00000073921"/>
<dbReference type="Orphanet" id="99861">
    <property type="disease" value="Precursor T-cell acute lymphoblastic leukemia"/>
</dbReference>
<dbReference type="PharmGKB" id="PA33287"/>
<dbReference type="VEuPathDB" id="HostDB:ENSG00000073921"/>
<dbReference type="eggNOG" id="KOG0251">
    <property type="taxonomic scope" value="Eukaryota"/>
</dbReference>
<dbReference type="GeneTree" id="ENSGT00950000183068"/>
<dbReference type="HOGENOM" id="CLU_014080_0_0_1"/>
<dbReference type="InParanoid" id="Q13492"/>
<dbReference type="OMA" id="XVNSNEL"/>
<dbReference type="OrthoDB" id="44015at2759"/>
<dbReference type="PAN-GO" id="Q13492">
    <property type="GO annotations" value="10 GO annotations based on evolutionary models"/>
</dbReference>
<dbReference type="PhylomeDB" id="Q13492"/>
<dbReference type="TreeFam" id="TF314861"/>
<dbReference type="PathwayCommons" id="Q13492"/>
<dbReference type="Reactome" id="R-HSA-432722">
    <property type="pathway name" value="Golgi Associated Vesicle Biogenesis"/>
</dbReference>
<dbReference type="Reactome" id="R-HSA-8856825">
    <property type="pathway name" value="Cargo recognition for clathrin-mediated endocytosis"/>
</dbReference>
<dbReference type="Reactome" id="R-HSA-8856828">
    <property type="pathway name" value="Clathrin-mediated endocytosis"/>
</dbReference>
<dbReference type="Reactome" id="R-HSA-9696264">
    <property type="pathway name" value="RND3 GTPase cycle"/>
</dbReference>
<dbReference type="SignaLink" id="Q13492"/>
<dbReference type="SIGNOR" id="Q13492"/>
<dbReference type="BioGRID-ORCS" id="8301">
    <property type="hits" value="50 hits in 1166 CRISPR screens"/>
</dbReference>
<dbReference type="CD-CODE" id="91857CE7">
    <property type="entry name" value="Nucleolus"/>
</dbReference>
<dbReference type="ChiTaRS" id="PICALM">
    <property type="organism name" value="human"/>
</dbReference>
<dbReference type="GeneWiki" id="PICALM"/>
<dbReference type="GenomeRNAi" id="8301"/>
<dbReference type="Pharos" id="Q13492">
    <property type="development level" value="Tbio"/>
</dbReference>
<dbReference type="PRO" id="PR:Q13492"/>
<dbReference type="Proteomes" id="UP000005640">
    <property type="component" value="Chromosome 11"/>
</dbReference>
<dbReference type="RNAct" id="Q13492">
    <property type="molecule type" value="protein"/>
</dbReference>
<dbReference type="Bgee" id="ENSG00000073921">
    <property type="expression patterns" value="Expressed in calcaneal tendon and 203 other cell types or tissues"/>
</dbReference>
<dbReference type="ExpressionAtlas" id="Q13492">
    <property type="expression patterns" value="baseline and differential"/>
</dbReference>
<dbReference type="GO" id="GO:0009986">
    <property type="term" value="C:cell surface"/>
    <property type="evidence" value="ECO:0000314"/>
    <property type="project" value="ARUK-UCL"/>
</dbReference>
<dbReference type="GO" id="GO:0030132">
    <property type="term" value="C:clathrin coat of coated pit"/>
    <property type="evidence" value="ECO:0000314"/>
    <property type="project" value="BHF-UCL"/>
</dbReference>
<dbReference type="GO" id="GO:0045334">
    <property type="term" value="C:clathrin-coated endocytic vesicle"/>
    <property type="evidence" value="ECO:0000303"/>
    <property type="project" value="ARUK-UCL"/>
</dbReference>
<dbReference type="GO" id="GO:0005905">
    <property type="term" value="C:clathrin-coated pit"/>
    <property type="evidence" value="ECO:0000314"/>
    <property type="project" value="UniProtKB"/>
</dbReference>
<dbReference type="GO" id="GO:0030136">
    <property type="term" value="C:clathrin-coated vesicle"/>
    <property type="evidence" value="ECO:0000315"/>
    <property type="project" value="ARUK-UCL"/>
</dbReference>
<dbReference type="GO" id="GO:0005829">
    <property type="term" value="C:cytosol"/>
    <property type="evidence" value="ECO:0000304"/>
    <property type="project" value="Reactome"/>
</dbReference>
<dbReference type="GO" id="GO:0005769">
    <property type="term" value="C:early endosome"/>
    <property type="evidence" value="ECO:0000314"/>
    <property type="project" value="ARUK-UCL"/>
</dbReference>
<dbReference type="GO" id="GO:0070381">
    <property type="term" value="C:endosome to plasma membrane transport vesicle"/>
    <property type="evidence" value="ECO:0000314"/>
    <property type="project" value="ARUK-UCL"/>
</dbReference>
<dbReference type="GO" id="GO:0098894">
    <property type="term" value="C:extrinsic component of presynaptic endocytic zone membrane"/>
    <property type="evidence" value="ECO:0000318"/>
    <property type="project" value="GO_Central"/>
</dbReference>
<dbReference type="GO" id="GO:0005794">
    <property type="term" value="C:Golgi apparatus"/>
    <property type="evidence" value="ECO:0007669"/>
    <property type="project" value="UniProtKB-SubCell"/>
</dbReference>
<dbReference type="GO" id="GO:0043231">
    <property type="term" value="C:intracellular membrane-bounded organelle"/>
    <property type="evidence" value="ECO:0000314"/>
    <property type="project" value="HPA"/>
</dbReference>
<dbReference type="GO" id="GO:0016020">
    <property type="term" value="C:membrane"/>
    <property type="evidence" value="ECO:0007005"/>
    <property type="project" value="UniProtKB"/>
</dbReference>
<dbReference type="GO" id="GO:0097418">
    <property type="term" value="C:neurofibrillary tangle"/>
    <property type="evidence" value="ECO:0000315"/>
    <property type="project" value="Alzheimers_University_of_Toronto"/>
</dbReference>
<dbReference type="GO" id="GO:0043025">
    <property type="term" value="C:neuronal cell body"/>
    <property type="evidence" value="ECO:0000314"/>
    <property type="project" value="Alzheimers_University_of_Toronto"/>
</dbReference>
<dbReference type="GO" id="GO:0005634">
    <property type="term" value="C:nucleus"/>
    <property type="evidence" value="ECO:0000314"/>
    <property type="project" value="BHF-UCL"/>
</dbReference>
<dbReference type="GO" id="GO:0048471">
    <property type="term" value="C:perinuclear region of cytoplasm"/>
    <property type="evidence" value="ECO:0007669"/>
    <property type="project" value="Ensembl"/>
</dbReference>
<dbReference type="GO" id="GO:0005886">
    <property type="term" value="C:plasma membrane"/>
    <property type="evidence" value="ECO:0000314"/>
    <property type="project" value="UniProtKB"/>
</dbReference>
<dbReference type="GO" id="GO:0045211">
    <property type="term" value="C:postsynaptic membrane"/>
    <property type="evidence" value="ECO:0000250"/>
    <property type="project" value="BHF-UCL"/>
</dbReference>
<dbReference type="GO" id="GO:0042734">
    <property type="term" value="C:presynaptic membrane"/>
    <property type="evidence" value="ECO:0000250"/>
    <property type="project" value="BHF-UCL"/>
</dbReference>
<dbReference type="GO" id="GO:0008021">
    <property type="term" value="C:synaptic vesicle"/>
    <property type="evidence" value="ECO:0000318"/>
    <property type="project" value="GO_Central"/>
</dbReference>
<dbReference type="GO" id="GO:0031982">
    <property type="term" value="C:vesicle"/>
    <property type="evidence" value="ECO:0000250"/>
    <property type="project" value="Alzheimers_University_of_Toronto"/>
</dbReference>
<dbReference type="GO" id="GO:0005545">
    <property type="term" value="F:1-phosphatidylinositol binding"/>
    <property type="evidence" value="ECO:0000250"/>
    <property type="project" value="UniProtKB"/>
</dbReference>
<dbReference type="GO" id="GO:0001540">
    <property type="term" value="F:amyloid-beta binding"/>
    <property type="evidence" value="ECO:0000305"/>
    <property type="project" value="ARUK-UCL"/>
</dbReference>
<dbReference type="GO" id="GO:0045296">
    <property type="term" value="F:cadherin binding"/>
    <property type="evidence" value="ECO:0007005"/>
    <property type="project" value="BHF-UCL"/>
</dbReference>
<dbReference type="GO" id="GO:0030276">
    <property type="term" value="F:clathrin binding"/>
    <property type="evidence" value="ECO:0000314"/>
    <property type="project" value="UniProtKB"/>
</dbReference>
<dbReference type="GO" id="GO:0032050">
    <property type="term" value="F:clathrin heavy chain binding"/>
    <property type="evidence" value="ECO:0000314"/>
    <property type="project" value="BHF-UCL"/>
</dbReference>
<dbReference type="GO" id="GO:0050750">
    <property type="term" value="F:low-density lipoprotein particle receptor binding"/>
    <property type="evidence" value="ECO:0000353"/>
    <property type="project" value="ARUK-UCL"/>
</dbReference>
<dbReference type="GO" id="GO:0005546">
    <property type="term" value="F:phosphatidylinositol-4,5-bisphosphate binding"/>
    <property type="evidence" value="ECO:0000250"/>
    <property type="project" value="ARUK-UCL"/>
</dbReference>
<dbReference type="GO" id="GO:0031267">
    <property type="term" value="F:small GTPase binding"/>
    <property type="evidence" value="ECO:0000353"/>
    <property type="project" value="ARUK-UCL"/>
</dbReference>
<dbReference type="GO" id="GO:0000149">
    <property type="term" value="F:SNARE binding"/>
    <property type="evidence" value="ECO:0000314"/>
    <property type="project" value="UniProtKB"/>
</dbReference>
<dbReference type="GO" id="GO:0048156">
    <property type="term" value="F:tau protein binding"/>
    <property type="evidence" value="ECO:0000353"/>
    <property type="project" value="Alzheimers_University_of_Toronto"/>
</dbReference>
<dbReference type="GO" id="GO:0150093">
    <property type="term" value="P:amyloid-beta clearance by transcytosis"/>
    <property type="evidence" value="ECO:0000316"/>
    <property type="project" value="ARUK-UCL"/>
</dbReference>
<dbReference type="GO" id="GO:0007409">
    <property type="term" value="P:axonogenesis"/>
    <property type="evidence" value="ECO:0007669"/>
    <property type="project" value="Ensembl"/>
</dbReference>
<dbReference type="GO" id="GO:0048268">
    <property type="term" value="P:clathrin coat assembly"/>
    <property type="evidence" value="ECO:0000314"/>
    <property type="project" value="UniProtKB"/>
</dbReference>
<dbReference type="GO" id="GO:0072583">
    <property type="term" value="P:clathrin-dependent endocytosis"/>
    <property type="evidence" value="ECO:0000315"/>
    <property type="project" value="Alzheimers_University_of_Toronto"/>
</dbReference>
<dbReference type="GO" id="GO:0048813">
    <property type="term" value="P:dendrite morphogenesis"/>
    <property type="evidence" value="ECO:0007669"/>
    <property type="project" value="Ensembl"/>
</dbReference>
<dbReference type="GO" id="GO:0006897">
    <property type="term" value="P:endocytosis"/>
    <property type="evidence" value="ECO:0000314"/>
    <property type="project" value="UniProtKB"/>
</dbReference>
<dbReference type="GO" id="GO:0016197">
    <property type="term" value="P:endosomal transport"/>
    <property type="evidence" value="ECO:0000315"/>
    <property type="project" value="BHF-UCL"/>
</dbReference>
<dbReference type="GO" id="GO:0030097">
    <property type="term" value="P:hemopoiesis"/>
    <property type="evidence" value="ECO:0007669"/>
    <property type="project" value="Ensembl"/>
</dbReference>
<dbReference type="GO" id="GO:0006879">
    <property type="term" value="P:intracellular iron ion homeostasis"/>
    <property type="evidence" value="ECO:0000315"/>
    <property type="project" value="ARUK-UCL"/>
</dbReference>
<dbReference type="GO" id="GO:0007611">
    <property type="term" value="P:learning or memory"/>
    <property type="evidence" value="ECO:0000250"/>
    <property type="project" value="ARUK-UCL"/>
</dbReference>
<dbReference type="GO" id="GO:0097753">
    <property type="term" value="P:membrane bending"/>
    <property type="evidence" value="ECO:0000315"/>
    <property type="project" value="ARUK-UCL"/>
</dbReference>
<dbReference type="GO" id="GO:0060586">
    <property type="term" value="P:multicellular organismal-level iron ion homeostasis"/>
    <property type="evidence" value="ECO:0000315"/>
    <property type="project" value="Alzheimers_University_of_Toronto"/>
</dbReference>
<dbReference type="GO" id="GO:0010629">
    <property type="term" value="P:negative regulation of gene expression"/>
    <property type="evidence" value="ECO:0000315"/>
    <property type="project" value="Alzheimers_University_of_Toronto"/>
</dbReference>
<dbReference type="GO" id="GO:2000009">
    <property type="term" value="P:negative regulation of protein localization to cell surface"/>
    <property type="evidence" value="ECO:0000315"/>
    <property type="project" value="ARUK-UCL"/>
</dbReference>
<dbReference type="GO" id="GO:1903077">
    <property type="term" value="P:negative regulation of protein localization to plasma membrane"/>
    <property type="evidence" value="ECO:0000315"/>
    <property type="project" value="ARUK-UCL"/>
</dbReference>
<dbReference type="GO" id="GO:0048261">
    <property type="term" value="P:negative regulation of receptor-mediated endocytosis"/>
    <property type="evidence" value="ECO:0000314"/>
    <property type="project" value="BHF-UCL"/>
</dbReference>
<dbReference type="GO" id="GO:1902993">
    <property type="term" value="P:positive regulation of amyloid precursor protein catabolic process"/>
    <property type="evidence" value="ECO:0000250"/>
    <property type="project" value="Alzheimers_University_of_Toronto"/>
</dbReference>
<dbReference type="GO" id="GO:1902004">
    <property type="term" value="P:positive regulation of amyloid-beta formation"/>
    <property type="evidence" value="ECO:0000315"/>
    <property type="project" value="Alzheimers_University_of_Toronto"/>
</dbReference>
<dbReference type="GO" id="GO:0045893">
    <property type="term" value="P:positive regulation of DNA-templated transcription"/>
    <property type="evidence" value="ECO:0000314"/>
    <property type="project" value="BHF-UCL"/>
</dbReference>
<dbReference type="GO" id="GO:0046579">
    <property type="term" value="P:positive regulation of Ras protein signal transduction"/>
    <property type="evidence" value="ECO:0000315"/>
    <property type="project" value="ARUK-UCL"/>
</dbReference>
<dbReference type="GO" id="GO:0065003">
    <property type="term" value="P:protein-containing complex assembly"/>
    <property type="evidence" value="ECO:0000304"/>
    <property type="project" value="ProtInc"/>
</dbReference>
<dbReference type="GO" id="GO:0031623">
    <property type="term" value="P:receptor internalization"/>
    <property type="evidence" value="ECO:0000315"/>
    <property type="project" value="BHF-UCL"/>
</dbReference>
<dbReference type="GO" id="GO:0006898">
    <property type="term" value="P:receptor-mediated endocytosis"/>
    <property type="evidence" value="ECO:0000314"/>
    <property type="project" value="UniProtKB"/>
</dbReference>
<dbReference type="GO" id="GO:1902991">
    <property type="term" value="P:regulation of amyloid precursor protein catabolic process"/>
    <property type="evidence" value="ECO:0000315"/>
    <property type="project" value="Alzheimers_University_of_Toronto"/>
</dbReference>
<dbReference type="GO" id="GO:0030100">
    <property type="term" value="P:regulation of endocytosis"/>
    <property type="evidence" value="ECO:0000315"/>
    <property type="project" value="BHF-UCL"/>
</dbReference>
<dbReference type="GO" id="GO:0032880">
    <property type="term" value="P:regulation of protein localization"/>
    <property type="evidence" value="ECO:0000314"/>
    <property type="project" value="BHF-UCL"/>
</dbReference>
<dbReference type="GO" id="GO:0097494">
    <property type="term" value="P:regulation of vesicle size"/>
    <property type="evidence" value="ECO:0000315"/>
    <property type="project" value="ARUK-UCL"/>
</dbReference>
<dbReference type="GO" id="GO:0016188">
    <property type="term" value="P:synaptic vesicle maturation"/>
    <property type="evidence" value="ECO:0000250"/>
    <property type="project" value="Alzheimers_University_of_Toronto"/>
</dbReference>
<dbReference type="GO" id="GO:0006900">
    <property type="term" value="P:vesicle budding from membrane"/>
    <property type="evidence" value="ECO:0000315"/>
    <property type="project" value="ARUK-UCL"/>
</dbReference>
<dbReference type="GO" id="GO:0035459">
    <property type="term" value="P:vesicle cargo loading"/>
    <property type="evidence" value="ECO:0000315"/>
    <property type="project" value="Alzheimers_University_of_Toronto"/>
</dbReference>
<dbReference type="GO" id="GO:0016192">
    <property type="term" value="P:vesicle-mediated transport"/>
    <property type="evidence" value="ECO:0000304"/>
    <property type="project" value="ProtInc"/>
</dbReference>
<dbReference type="CDD" id="cd16985">
    <property type="entry name" value="ANTH_N_AP180"/>
    <property type="match status" value="1"/>
</dbReference>
<dbReference type="FunFam" id="1.20.58.150:FF:000001">
    <property type="entry name" value="phosphatidylinositol-binding clathrin assembly protein-like isoform X1"/>
    <property type="match status" value="1"/>
</dbReference>
<dbReference type="FunFam" id="1.25.40.90:FF:000001">
    <property type="entry name" value="phosphatidylinositol-binding clathrin assembly protein-like isoform X1"/>
    <property type="match status" value="1"/>
</dbReference>
<dbReference type="Gene3D" id="1.25.40.90">
    <property type="match status" value="1"/>
</dbReference>
<dbReference type="Gene3D" id="1.20.58.150">
    <property type="entry name" value="ANTH domain"/>
    <property type="match status" value="1"/>
</dbReference>
<dbReference type="InterPro" id="IPR011417">
    <property type="entry name" value="ANTH_dom"/>
</dbReference>
<dbReference type="InterPro" id="IPR014712">
    <property type="entry name" value="ANTH_dom_sf"/>
</dbReference>
<dbReference type="InterPro" id="IPR045192">
    <property type="entry name" value="AP180-like"/>
</dbReference>
<dbReference type="InterPro" id="IPR013809">
    <property type="entry name" value="ENTH"/>
</dbReference>
<dbReference type="InterPro" id="IPR008942">
    <property type="entry name" value="ENTH_VHS"/>
</dbReference>
<dbReference type="PANTHER" id="PTHR22951">
    <property type="entry name" value="CLATHRIN ASSEMBLY PROTEIN"/>
    <property type="match status" value="1"/>
</dbReference>
<dbReference type="PANTHER" id="PTHR22951:SF16">
    <property type="entry name" value="PHOSPHATIDYLINOSITOL-BINDING CLATHRIN ASSEMBLY PROTEIN"/>
    <property type="match status" value="1"/>
</dbReference>
<dbReference type="Pfam" id="PF07651">
    <property type="entry name" value="ANTH"/>
    <property type="match status" value="1"/>
</dbReference>
<dbReference type="SMART" id="SM00273">
    <property type="entry name" value="ENTH"/>
    <property type="match status" value="1"/>
</dbReference>
<dbReference type="SUPFAM" id="SSF48464">
    <property type="entry name" value="ENTH/VHS domain"/>
    <property type="match status" value="1"/>
</dbReference>
<dbReference type="SUPFAM" id="SSF89009">
    <property type="entry name" value="GAT-like domain"/>
    <property type="match status" value="1"/>
</dbReference>
<dbReference type="PROSITE" id="PS50942">
    <property type="entry name" value="ENTH"/>
    <property type="match status" value="1"/>
</dbReference>
<protein>
    <recommendedName>
        <fullName>Phosphatidylinositol-binding clathrin assembly protein</fullName>
    </recommendedName>
    <alternativeName>
        <fullName>Clathrin assembly lymphoid myeloid leukemia protein</fullName>
    </alternativeName>
</protein>
<gene>
    <name type="primary">PICALM</name>
    <name type="synonym">CALM</name>
</gene>
<organism>
    <name type="scientific">Homo sapiens</name>
    <name type="common">Human</name>
    <dbReference type="NCBI Taxonomy" id="9606"/>
    <lineage>
        <taxon>Eukaryota</taxon>
        <taxon>Metazoa</taxon>
        <taxon>Chordata</taxon>
        <taxon>Craniata</taxon>
        <taxon>Vertebrata</taxon>
        <taxon>Euteleostomi</taxon>
        <taxon>Mammalia</taxon>
        <taxon>Eutheria</taxon>
        <taxon>Euarchontoglires</taxon>
        <taxon>Primates</taxon>
        <taxon>Haplorrhini</taxon>
        <taxon>Catarrhini</taxon>
        <taxon>Hominidae</taxon>
        <taxon>Homo</taxon>
    </lineage>
</organism>
<accession>Q13492</accession>
<accession>B4DTM3</accession>
<accession>E9PN05</accession>
<accession>F8VPG7</accession>
<accession>O60700</accession>
<accession>Q4LE54</accession>
<accession>Q6GMQ6</accession>
<accession>Q86XZ9</accession>
<evidence type="ECO:0000255" key="1">
    <source>
        <dbReference type="PROSITE-ProRule" id="PRU00243"/>
    </source>
</evidence>
<evidence type="ECO:0000256" key="2">
    <source>
        <dbReference type="SAM" id="MobiDB-lite"/>
    </source>
</evidence>
<evidence type="ECO:0000269" key="3">
    <source>
    </source>
</evidence>
<evidence type="ECO:0000269" key="4">
    <source>
    </source>
</evidence>
<evidence type="ECO:0000269" key="5">
    <source>
    </source>
</evidence>
<evidence type="ECO:0000269" key="6">
    <source>
    </source>
</evidence>
<evidence type="ECO:0000269" key="7">
    <source>
    </source>
</evidence>
<evidence type="ECO:0000269" key="8">
    <source>
    </source>
</evidence>
<evidence type="ECO:0000269" key="9">
    <source>
    </source>
</evidence>
<evidence type="ECO:0000269" key="10">
    <source>
    </source>
</evidence>
<evidence type="ECO:0000269" key="11">
    <source>
    </source>
</evidence>
<evidence type="ECO:0000269" key="12">
    <source>
    </source>
</evidence>
<evidence type="ECO:0000269" key="13">
    <source>
    </source>
</evidence>
<evidence type="ECO:0000269" key="14">
    <source>
    </source>
</evidence>
<evidence type="ECO:0000303" key="15">
    <source>
    </source>
</evidence>
<evidence type="ECO:0000303" key="16">
    <source>
    </source>
</evidence>
<evidence type="ECO:0000303" key="17">
    <source>
    </source>
</evidence>
<evidence type="ECO:0000303" key="18">
    <source ref="3"/>
</evidence>
<evidence type="ECO:0000305" key="19"/>
<evidence type="ECO:0007744" key="20">
    <source>
    </source>
</evidence>
<evidence type="ECO:0007744" key="21">
    <source>
    </source>
</evidence>
<evidence type="ECO:0007744" key="22">
    <source>
    </source>
</evidence>
<evidence type="ECO:0007744" key="23">
    <source>
    </source>
</evidence>
<evidence type="ECO:0007744" key="24">
    <source>
    </source>
</evidence>
<evidence type="ECO:0007744" key="25">
    <source>
    </source>
</evidence>
<feature type="initiator methionine" description="Removed" evidence="20 21 22">
    <location>
        <position position="1"/>
    </location>
</feature>
<feature type="chain" id="PRO_0000187062" description="Phosphatidylinositol-binding clathrin assembly protein">
    <location>
        <begin position="2"/>
        <end position="652"/>
    </location>
</feature>
<feature type="domain" description="ENTH" evidence="1">
    <location>
        <begin position="14"/>
        <end position="145"/>
    </location>
</feature>
<feature type="region of interest" description="Interaction with PIMREG" evidence="5">
    <location>
        <begin position="221"/>
        <end position="294"/>
    </location>
</feature>
<feature type="region of interest" description="Disordered" evidence="2">
    <location>
        <begin position="559"/>
        <end position="580"/>
    </location>
</feature>
<feature type="site" description="Breakpoint for translocation to form CALM/MLLT10 fusion protein">
    <location>
        <begin position="648"/>
        <end position="649"/>
    </location>
</feature>
<feature type="modified residue" description="N-acetylserine" evidence="20 21 22">
    <location>
        <position position="2"/>
    </location>
</feature>
<feature type="modified residue" description="Phosphoserine" evidence="23 24">
    <location>
        <position position="16"/>
    </location>
</feature>
<feature type="modified residue" description="Phosphoserine" evidence="23">
    <location>
        <position position="20"/>
    </location>
</feature>
<feature type="modified residue" description="Phosphoserine" evidence="23">
    <location>
        <position position="303"/>
    </location>
</feature>
<feature type="modified residue" description="Phosphoserine" evidence="23">
    <location>
        <position position="315"/>
    </location>
</feature>
<feature type="cross-link" description="Glycyl lysine isopeptide (Lys-Gly) (interchain with G-Cter in SUMO2)" evidence="25">
    <location>
        <position position="238"/>
    </location>
</feature>
<feature type="splice variant" id="VSP_044567" description="In isoform 4." evidence="15">
    <location>
        <begin position="1"/>
        <end position="51"/>
    </location>
</feature>
<feature type="splice variant" id="VSP_009607" description="In isoform 3 and isoform 4." evidence="15 16">
    <location>
        <begin position="420"/>
        <end position="469"/>
    </location>
</feature>
<feature type="splice variant" id="VSP_044568" description="In isoform 5." evidence="18">
    <location>
        <begin position="420"/>
        <end position="426"/>
    </location>
</feature>
<feature type="splice variant" id="VSP_009608" description="In isoform 3." evidence="16">
    <original>M</original>
    <variation>MNGMHFPQY</variation>
    <location>
        <position position="593"/>
    </location>
</feature>
<feature type="splice variant" id="VSP_004067" description="In isoform 2." evidence="17">
    <location>
        <begin position="594"/>
        <end position="613"/>
    </location>
</feature>
<feature type="sequence variant" id="VAR_028191" description="In dbSNP:rs12800974.">
    <original>T</original>
    <variation>P</variation>
    <location>
        <position position="158"/>
    </location>
</feature>
<feature type="sequence variant" id="VAR_028192" description="In dbSNP:rs12222608.">
    <original>S</original>
    <variation>F</variation>
    <location>
        <position position="383"/>
    </location>
</feature>
<feature type="sequence variant" id="VAR_028193" description="In dbSNP:rs1043858." evidence="13 14">
    <original>W</original>
    <variation>C</variation>
    <location>
        <position position="578"/>
    </location>
</feature>
<feature type="sequence variant" id="VAR_028194" description="In dbSNP:rs1043859." evidence="13 14">
    <original>Q</original>
    <variation>E</variation>
    <location>
        <position position="579"/>
    </location>
</feature>
<feature type="sequence variant" id="VAR_028195" description="In dbSNP:rs556337.">
    <original>F</original>
    <variation>L</variation>
    <location>
        <position position="641"/>
    </location>
</feature>
<feature type="sequence conflict" description="In Ref. 2; BAG62035." evidence="19" ref="2">
    <original>N</original>
    <variation>D</variation>
    <location>
        <position position="132"/>
    </location>
</feature>
<feature type="sequence conflict" description="In Ref. 1; AAB07762." evidence="19" ref="1">
    <original>N</original>
    <variation>H</variation>
    <location>
        <position position="212"/>
    </location>
</feature>
<feature type="sequence conflict" description="In Ref. 2; BAG62035." evidence="19" ref="2">
    <original>E</original>
    <variation>G</variation>
    <location>
        <position position="331"/>
    </location>
</feature>
<keyword id="KW-0007">Acetylation</keyword>
<keyword id="KW-0025">Alternative splicing</keyword>
<keyword id="KW-1003">Cell membrane</keyword>
<keyword id="KW-0160">Chromosomal rearrangement</keyword>
<keyword id="KW-0168">Coated pit</keyword>
<keyword id="KW-0968">Cytoplasmic vesicle</keyword>
<keyword id="KW-0254">Endocytosis</keyword>
<keyword id="KW-0333">Golgi apparatus</keyword>
<keyword id="KW-1017">Isopeptide bond</keyword>
<keyword id="KW-0472">Membrane</keyword>
<keyword id="KW-0539">Nucleus</keyword>
<keyword id="KW-0597">Phosphoprotein</keyword>
<keyword id="KW-1267">Proteomics identification</keyword>
<keyword id="KW-0656">Proto-oncogene</keyword>
<keyword id="KW-1185">Reference proteome</keyword>
<keyword id="KW-0832">Ubl conjugation</keyword>
<reference key="1">
    <citation type="journal article" date="1996" name="Proc. Natl. Acad. Sci. U.S.A.">
        <title>The t(10;11)(p13;q14) in the U937 cell line results in the fusion of the AF10 gene and CALM, encoding a new member of the AP-3 clathrin assembly protein family.</title>
        <authorList>
            <person name="Dreyling M.H."/>
            <person name="Martinez-Climent J.A."/>
            <person name="Zheng M."/>
            <person name="Mao J."/>
            <person name="Rowley J.D."/>
            <person name="Bohlander S.K."/>
        </authorList>
    </citation>
    <scope>NUCLEOTIDE SEQUENCE [MRNA] (ISOFORM 1)</scope>
    <scope>CHROMOSOMAL TRANSLOCATION</scope>
    <scope>TISSUE SPECIFICITY</scope>
    <scope>VARIANTS CYS-578 AND GLU-579</scope>
</reference>
<reference key="2">
    <citation type="journal article" date="2004" name="Nat. Genet.">
        <title>Complete sequencing and characterization of 21,243 full-length human cDNAs.</title>
        <authorList>
            <person name="Ota T."/>
            <person name="Suzuki Y."/>
            <person name="Nishikawa T."/>
            <person name="Otsuki T."/>
            <person name="Sugiyama T."/>
            <person name="Irie R."/>
            <person name="Wakamatsu A."/>
            <person name="Hayashi K."/>
            <person name="Sato H."/>
            <person name="Nagai K."/>
            <person name="Kimura K."/>
            <person name="Makita H."/>
            <person name="Sekine M."/>
            <person name="Obayashi M."/>
            <person name="Nishi T."/>
            <person name="Shibahara T."/>
            <person name="Tanaka T."/>
            <person name="Ishii S."/>
            <person name="Yamamoto J."/>
            <person name="Saito K."/>
            <person name="Kawai Y."/>
            <person name="Isono Y."/>
            <person name="Nakamura Y."/>
            <person name="Nagahari K."/>
            <person name="Murakami K."/>
            <person name="Yasuda T."/>
            <person name="Iwayanagi T."/>
            <person name="Wagatsuma M."/>
            <person name="Shiratori A."/>
            <person name="Sudo H."/>
            <person name="Hosoiri T."/>
            <person name="Kaku Y."/>
            <person name="Kodaira H."/>
            <person name="Kondo H."/>
            <person name="Sugawara M."/>
            <person name="Takahashi M."/>
            <person name="Kanda K."/>
            <person name="Yokoi T."/>
            <person name="Furuya T."/>
            <person name="Kikkawa E."/>
            <person name="Omura Y."/>
            <person name="Abe K."/>
            <person name="Kamihara K."/>
            <person name="Katsuta N."/>
            <person name="Sato K."/>
            <person name="Tanikawa M."/>
            <person name="Yamazaki M."/>
            <person name="Ninomiya K."/>
            <person name="Ishibashi T."/>
            <person name="Yamashita H."/>
            <person name="Murakawa K."/>
            <person name="Fujimori K."/>
            <person name="Tanai H."/>
            <person name="Kimata M."/>
            <person name="Watanabe M."/>
            <person name="Hiraoka S."/>
            <person name="Chiba Y."/>
            <person name="Ishida S."/>
            <person name="Ono Y."/>
            <person name="Takiguchi S."/>
            <person name="Watanabe S."/>
            <person name="Yosida M."/>
            <person name="Hotuta T."/>
            <person name="Kusano J."/>
            <person name="Kanehori K."/>
            <person name="Takahashi-Fujii A."/>
            <person name="Hara H."/>
            <person name="Tanase T.-O."/>
            <person name="Nomura Y."/>
            <person name="Togiya S."/>
            <person name="Komai F."/>
            <person name="Hara R."/>
            <person name="Takeuchi K."/>
            <person name="Arita M."/>
            <person name="Imose N."/>
            <person name="Musashino K."/>
            <person name="Yuuki H."/>
            <person name="Oshima A."/>
            <person name="Sasaki N."/>
            <person name="Aotsuka S."/>
            <person name="Yoshikawa Y."/>
            <person name="Matsunawa H."/>
            <person name="Ichihara T."/>
            <person name="Shiohata N."/>
            <person name="Sano S."/>
            <person name="Moriya S."/>
            <person name="Momiyama H."/>
            <person name="Satoh N."/>
            <person name="Takami S."/>
            <person name="Terashima Y."/>
            <person name="Suzuki O."/>
            <person name="Nakagawa S."/>
            <person name="Senoh A."/>
            <person name="Mizoguchi H."/>
            <person name="Goto Y."/>
            <person name="Shimizu F."/>
            <person name="Wakebe H."/>
            <person name="Hishigaki H."/>
            <person name="Watanabe T."/>
            <person name="Sugiyama A."/>
            <person name="Takemoto M."/>
            <person name="Kawakami B."/>
            <person name="Yamazaki M."/>
            <person name="Watanabe K."/>
            <person name="Kumagai A."/>
            <person name="Itakura S."/>
            <person name="Fukuzumi Y."/>
            <person name="Fujimori Y."/>
            <person name="Komiyama M."/>
            <person name="Tashiro H."/>
            <person name="Tanigami A."/>
            <person name="Fujiwara T."/>
            <person name="Ono T."/>
            <person name="Yamada K."/>
            <person name="Fujii Y."/>
            <person name="Ozaki K."/>
            <person name="Hirao M."/>
            <person name="Ohmori Y."/>
            <person name="Kawabata A."/>
            <person name="Hikiji T."/>
            <person name="Kobatake N."/>
            <person name="Inagaki H."/>
            <person name="Ikema Y."/>
            <person name="Okamoto S."/>
            <person name="Okitani R."/>
            <person name="Kawakami T."/>
            <person name="Noguchi S."/>
            <person name="Itoh T."/>
            <person name="Shigeta K."/>
            <person name="Senba T."/>
            <person name="Matsumura K."/>
            <person name="Nakajima Y."/>
            <person name="Mizuno T."/>
            <person name="Morinaga M."/>
            <person name="Sasaki M."/>
            <person name="Togashi T."/>
            <person name="Oyama M."/>
            <person name="Hata H."/>
            <person name="Watanabe M."/>
            <person name="Komatsu T."/>
            <person name="Mizushima-Sugano J."/>
            <person name="Satoh T."/>
            <person name="Shirai Y."/>
            <person name="Takahashi Y."/>
            <person name="Nakagawa K."/>
            <person name="Okumura K."/>
            <person name="Nagase T."/>
            <person name="Nomura N."/>
            <person name="Kikuchi H."/>
            <person name="Masuho Y."/>
            <person name="Yamashita R."/>
            <person name="Nakai K."/>
            <person name="Yada T."/>
            <person name="Nakamura Y."/>
            <person name="Ohara O."/>
            <person name="Isogai T."/>
            <person name="Sugano S."/>
        </authorList>
    </citation>
    <scope>NUCLEOTIDE SEQUENCE [LARGE SCALE MRNA] (ISOFORM 4)</scope>
    <source>
        <tissue>Placenta</tissue>
    </source>
</reference>
<reference key="3">
    <citation type="submission" date="2005-03" db="EMBL/GenBank/DDBJ databases">
        <title>Preparation of a set of expression-ready clones of mammalian long cDNAs encoding large proteins by the ORF trap cloning method.</title>
        <authorList>
            <person name="Nakajima D."/>
            <person name="Saito K."/>
            <person name="Yamakawa H."/>
            <person name="Kikuno R.F."/>
            <person name="Nakayama M."/>
            <person name="Ohara R."/>
            <person name="Okazaki N."/>
            <person name="Koga H."/>
            <person name="Nagase T."/>
            <person name="Ohara O."/>
        </authorList>
    </citation>
    <scope>NUCLEOTIDE SEQUENCE [LARGE SCALE MRNA] (ISOFORM 5)</scope>
    <source>
        <tissue>Brain</tissue>
    </source>
</reference>
<reference key="4">
    <citation type="journal article" date="2006" name="Nature">
        <title>Human chromosome 11 DNA sequence and analysis including novel gene identification.</title>
        <authorList>
            <person name="Taylor T.D."/>
            <person name="Noguchi H."/>
            <person name="Totoki Y."/>
            <person name="Toyoda A."/>
            <person name="Kuroki Y."/>
            <person name="Dewar K."/>
            <person name="Lloyd C."/>
            <person name="Itoh T."/>
            <person name="Takeda T."/>
            <person name="Kim D.-W."/>
            <person name="She X."/>
            <person name="Barlow K.F."/>
            <person name="Bloom T."/>
            <person name="Bruford E."/>
            <person name="Chang J.L."/>
            <person name="Cuomo C.A."/>
            <person name="Eichler E."/>
            <person name="FitzGerald M.G."/>
            <person name="Jaffe D.B."/>
            <person name="LaButti K."/>
            <person name="Nicol R."/>
            <person name="Park H.-S."/>
            <person name="Seaman C."/>
            <person name="Sougnez C."/>
            <person name="Yang X."/>
            <person name="Zimmer A.R."/>
            <person name="Zody M.C."/>
            <person name="Birren B.W."/>
            <person name="Nusbaum C."/>
            <person name="Fujiyama A."/>
            <person name="Hattori M."/>
            <person name="Rogers J."/>
            <person name="Lander E.S."/>
            <person name="Sakaki Y."/>
        </authorList>
    </citation>
    <scope>NUCLEOTIDE SEQUENCE [LARGE SCALE GENOMIC DNA]</scope>
</reference>
<reference key="5">
    <citation type="submission" date="2005-07" db="EMBL/GenBank/DDBJ databases">
        <authorList>
            <person name="Mural R.J."/>
            <person name="Istrail S."/>
            <person name="Sutton G.G."/>
            <person name="Florea L."/>
            <person name="Halpern A.L."/>
            <person name="Mobarry C.M."/>
            <person name="Lippert R."/>
            <person name="Walenz B."/>
            <person name="Shatkay H."/>
            <person name="Dew I."/>
            <person name="Miller J.R."/>
            <person name="Flanigan M.J."/>
            <person name="Edwards N.J."/>
            <person name="Bolanos R."/>
            <person name="Fasulo D."/>
            <person name="Halldorsson B.V."/>
            <person name="Hannenhalli S."/>
            <person name="Turner R."/>
            <person name="Yooseph S."/>
            <person name="Lu F."/>
            <person name="Nusskern D.R."/>
            <person name="Shue B.C."/>
            <person name="Zheng X.H."/>
            <person name="Zhong F."/>
            <person name="Delcher A.L."/>
            <person name="Huson D.H."/>
            <person name="Kravitz S.A."/>
            <person name="Mouchard L."/>
            <person name="Reinert K."/>
            <person name="Remington K.A."/>
            <person name="Clark A.G."/>
            <person name="Waterman M.S."/>
            <person name="Eichler E.E."/>
            <person name="Adams M.D."/>
            <person name="Hunkapiller M.W."/>
            <person name="Myers E.W."/>
            <person name="Venter J.C."/>
        </authorList>
    </citation>
    <scope>NUCLEOTIDE SEQUENCE [LARGE SCALE GENOMIC DNA]</scope>
</reference>
<reference key="6">
    <citation type="journal article" date="2004" name="Genome Res.">
        <title>The status, quality, and expansion of the NIH full-length cDNA project: the Mammalian Gene Collection (MGC).</title>
        <authorList>
            <consortium name="The MGC Project Team"/>
        </authorList>
    </citation>
    <scope>NUCLEOTIDE SEQUENCE [LARGE SCALE MRNA] (ISOFORMS 1 AND 3)</scope>
    <source>
        <tissue>PNS</tissue>
    </source>
</reference>
<reference key="7">
    <citation type="journal article" date="1998" name="Leukemia">
        <title>Alternative splicing in wild-type AF10 and CALM cDNAs and in AF10-CALM and CALM-AF10 fusion cDNAs produced by the t(10;11)(p13-14;q14-q21) suggests a potential role for truncated AF10 polypeptides.</title>
        <authorList>
            <person name="Silliman C.C."/>
            <person name="McGavran L."/>
            <person name="Wei Q."/>
            <person name="Miller L.A."/>
            <person name="Li S."/>
            <person name="Hunger S.P."/>
        </authorList>
    </citation>
    <scope>NUCLEOTIDE SEQUENCE [MRNA] OF 575-652 (ISOFORMS 1 AND 2)</scope>
    <scope>VARIANTS CYS-578 AND GLU-579</scope>
    <source>
        <tissue>Bone marrow</tissue>
    </source>
</reference>
<reference key="8">
    <citation type="journal article" date="1999" name="Mol. Biol. Cell">
        <title>Clathrin assembly lymphoid myeloid leukemia (CALM) protein: localization in endocytic-coated pits, interactions with clathrin, and the impact of overexpression on clathrin-mediated traffic.</title>
        <authorList>
            <person name="Tebar F."/>
            <person name="Bohlander S.K."/>
            <person name="Sorkin A."/>
        </authorList>
    </citation>
    <scope>FUNCTION</scope>
    <scope>INTERACTION WITH CLATHRIN</scope>
    <scope>SUBCELLULAR LOCATION</scope>
</reference>
<reference key="9">
    <citation type="journal article" date="2005" name="Traffic">
        <title>Effect of clathrin assembly lymphoid myeloid leukemia protein depletion on clathrin coat formation.</title>
        <authorList>
            <person name="Meyerholz A."/>
            <person name="Hinrichsen L."/>
            <person name="Groos S."/>
            <person name="Esk P.C."/>
            <person name="Brandes G."/>
            <person name="Ungewickell E.J."/>
        </authorList>
    </citation>
    <scope>FUNCTION</scope>
    <scope>SUBCELLULAR LOCATION</scope>
    <scope>INTERACTION WITH AP2A1 AND CLATHRIN</scope>
</reference>
<reference key="10">
    <citation type="journal article" date="2006" name="Oncogene">
        <title>The novel CALM interactor CATS influences the subcellular localization of the leukemogenic fusion protein CALM/AF10.</title>
        <authorList>
            <person name="Archangelo L.F."/>
            <person name="Glaesner J."/>
            <person name="Krause A."/>
            <person name="Bohlander S.K."/>
        </authorList>
    </citation>
    <scope>SUBCELLULAR LOCATION</scope>
    <scope>INTERACTION WITH PIMREG</scope>
</reference>
<reference key="11">
    <citation type="journal article" date="2008" name="Proc. Natl. Acad. Sci. U.S.A.">
        <title>A quantitative atlas of mitotic phosphorylation.</title>
        <authorList>
            <person name="Dephoure N."/>
            <person name="Zhou C."/>
            <person name="Villen J."/>
            <person name="Beausoleil S.A."/>
            <person name="Bakalarski C.E."/>
            <person name="Elledge S.J."/>
            <person name="Gygi S.P."/>
        </authorList>
    </citation>
    <scope>IDENTIFICATION BY MASS SPECTROMETRY [LARGE SCALE ANALYSIS]</scope>
    <source>
        <tissue>Cervix carcinoma</tissue>
    </source>
</reference>
<reference key="12">
    <citation type="journal article" date="2009" name="Anal. Chem.">
        <title>Lys-N and trypsin cover complementary parts of the phosphoproteome in a refined SCX-based approach.</title>
        <authorList>
            <person name="Gauci S."/>
            <person name="Helbig A.O."/>
            <person name="Slijper M."/>
            <person name="Krijgsveld J."/>
            <person name="Heck A.J."/>
            <person name="Mohammed S."/>
        </authorList>
    </citation>
    <scope>ACETYLATION [LARGE SCALE ANALYSIS] AT SER-2</scope>
    <scope>CLEAVAGE OF INITIATOR METHIONINE [LARGE SCALE ANALYSIS]</scope>
    <scope>IDENTIFICATION BY MASS SPECTROMETRY [LARGE SCALE ANALYSIS]</scope>
</reference>
<reference key="13">
    <citation type="journal article" date="2010" name="Sci. Signal.">
        <title>Quantitative phosphoproteomics reveals widespread full phosphorylation site occupancy during mitosis.</title>
        <authorList>
            <person name="Olsen J.V."/>
            <person name="Vermeulen M."/>
            <person name="Santamaria A."/>
            <person name="Kumar C."/>
            <person name="Miller M.L."/>
            <person name="Jensen L.J."/>
            <person name="Gnad F."/>
            <person name="Cox J."/>
            <person name="Jensen T.S."/>
            <person name="Nigg E.A."/>
            <person name="Brunak S."/>
            <person name="Mann M."/>
        </authorList>
    </citation>
    <scope>IDENTIFICATION BY MASS SPECTROMETRY [LARGE SCALE ANALYSIS]</scope>
    <source>
        <tissue>Cervix carcinoma</tissue>
    </source>
</reference>
<reference key="14">
    <citation type="journal article" date="2011" name="BMC Syst. Biol.">
        <title>Initial characterization of the human central proteome.</title>
        <authorList>
            <person name="Burkard T.R."/>
            <person name="Planyavsky M."/>
            <person name="Kaupe I."/>
            <person name="Breitwieser F.P."/>
            <person name="Buerckstuemmer T."/>
            <person name="Bennett K.L."/>
            <person name="Superti-Furga G."/>
            <person name="Colinge J."/>
        </authorList>
    </citation>
    <scope>IDENTIFICATION BY MASS SPECTROMETRY [LARGE SCALE ANALYSIS]</scope>
</reference>
<reference key="15">
    <citation type="journal article" date="2011" name="Cell">
        <title>The molecular basis for the endocytosis of small R-SNAREs by the clathrin adaptor CALM.</title>
        <authorList>
            <person name="Miller S.E."/>
            <person name="Sahlender D.A."/>
            <person name="Graham S.C."/>
            <person name="Honing S."/>
            <person name="Robinson M.S."/>
            <person name="Peden A.A."/>
            <person name="Owen D.J."/>
        </authorList>
    </citation>
    <scope>FUNCTION</scope>
    <scope>INTERACTION WITH VAMP2; VAMP3 AND VAMP8</scope>
</reference>
<reference key="16">
    <citation type="journal article" date="2011" name="Proc. Natl. Acad. Sci. U.S.A.">
        <title>SNARE motif-mediated sorting of synaptobrevin by the endocytic adaptors clathrin assembly lymphoid myeloid leukemia (CALM) and AP180 at synapses.</title>
        <authorList>
            <person name="Koo S.J."/>
            <person name="Markovic S."/>
            <person name="Puchkov D."/>
            <person name="Mahrenholz C.C."/>
            <person name="Beceren-Braun F."/>
            <person name="Maritzen T."/>
            <person name="Dernedde J."/>
            <person name="Volkmer R."/>
            <person name="Oschkinat H."/>
            <person name="Haucke V."/>
        </authorList>
    </citation>
    <scope>FUNCTION</scope>
    <scope>INTERACTION WITH VAMP2</scope>
</reference>
<reference key="17">
    <citation type="journal article" date="2011" name="Sci. Signal.">
        <title>System-wide temporal characterization of the proteome and phosphoproteome of human embryonic stem cell differentiation.</title>
        <authorList>
            <person name="Rigbolt K.T."/>
            <person name="Prokhorova T.A."/>
            <person name="Akimov V."/>
            <person name="Henningsen J."/>
            <person name="Johansen P.T."/>
            <person name="Kratchmarova I."/>
            <person name="Kassem M."/>
            <person name="Mann M."/>
            <person name="Olsen J.V."/>
            <person name="Blagoev B."/>
        </authorList>
    </citation>
    <scope>ACETYLATION [LARGE SCALE ANALYSIS] AT SER-2</scope>
    <scope>CLEAVAGE OF INITIATOR METHIONINE [LARGE SCALE ANALYSIS]</scope>
    <scope>IDENTIFICATION BY MASS SPECTROMETRY [LARGE SCALE ANALYSIS]</scope>
</reference>
<reference key="18">
    <citation type="journal article" date="2012" name="Proc. Natl. Acad. Sci. U.S.A.">
        <title>N-terminal acetylome analyses and functional insights of the N-terminal acetyltransferase NatB.</title>
        <authorList>
            <person name="Van Damme P."/>
            <person name="Lasa M."/>
            <person name="Polevoda B."/>
            <person name="Gazquez C."/>
            <person name="Elosegui-Artola A."/>
            <person name="Kim D.S."/>
            <person name="De Juan-Pardo E."/>
            <person name="Demeyer K."/>
            <person name="Hole K."/>
            <person name="Larrea E."/>
            <person name="Timmerman E."/>
            <person name="Prieto J."/>
            <person name="Arnesen T."/>
            <person name="Sherman F."/>
            <person name="Gevaert K."/>
            <person name="Aldabe R."/>
        </authorList>
    </citation>
    <scope>ACETYLATION [LARGE SCALE ANALYSIS] AT SER-2</scope>
    <scope>CLEAVAGE OF INITIATOR METHIONINE [LARGE SCALE ANALYSIS]</scope>
    <scope>IDENTIFICATION BY MASS SPECTROMETRY [LARGE SCALE ANALYSIS]</scope>
</reference>
<reference key="19">
    <citation type="journal article" date="2013" name="PLoS ONE">
        <title>Uncoupling the functions of CALM in VAMP sorting and clathrin-coated pit formation.</title>
        <authorList>
            <person name="Sahlender D.A."/>
            <person name="Kozik P."/>
            <person name="Miller S.E."/>
            <person name="Peden A.A."/>
            <person name="Robinson M.S."/>
        </authorList>
    </citation>
    <scope>FUNCTION</scope>
    <scope>INTERACTION WITH VAMP7</scope>
</reference>
<reference key="20">
    <citation type="journal article" date="2013" name="Proc. Natl. Acad. Sci. U.S.A.">
        <title>Adaptor complex AP2/PICALM, through interaction with LC3, targets Alzheimer's APP-CTF for terminal degradation via autophagy.</title>
        <authorList>
            <person name="Tian Y."/>
            <person name="Chang J.C."/>
            <person name="Fan E.Y."/>
            <person name="Flajolet M."/>
            <person name="Greengard P."/>
        </authorList>
    </citation>
    <scope>FUNCTION</scope>
    <scope>INTERACTION WITH LC3/MAP1LC3A</scope>
</reference>
<reference key="21">
    <citation type="journal article" date="2013" name="J. Proteome Res.">
        <title>Toward a comprehensive characterization of a human cancer cell phosphoproteome.</title>
        <authorList>
            <person name="Zhou H."/>
            <person name="Di Palma S."/>
            <person name="Preisinger C."/>
            <person name="Peng M."/>
            <person name="Polat A.N."/>
            <person name="Heck A.J."/>
            <person name="Mohammed S."/>
        </authorList>
    </citation>
    <scope>PHOSPHORYLATION [LARGE SCALE ANALYSIS] AT SER-16; SER-20; SER-303 AND SER-315</scope>
    <scope>IDENTIFICATION BY MASS SPECTROMETRY [LARGE SCALE ANALYSIS]</scope>
    <source>
        <tissue>Cervix carcinoma</tissue>
        <tissue>Erythroleukemia</tissue>
    </source>
</reference>
<reference key="22">
    <citation type="journal article" date="2014" name="J. Proteomics">
        <title>An enzyme assisted RP-RPLC approach for in-depth analysis of human liver phosphoproteome.</title>
        <authorList>
            <person name="Bian Y."/>
            <person name="Song C."/>
            <person name="Cheng K."/>
            <person name="Dong M."/>
            <person name="Wang F."/>
            <person name="Huang J."/>
            <person name="Sun D."/>
            <person name="Wang L."/>
            <person name="Ye M."/>
            <person name="Zou H."/>
        </authorList>
    </citation>
    <scope>PHOSPHORYLATION [LARGE SCALE ANALYSIS] AT SER-16</scope>
    <scope>IDENTIFICATION BY MASS SPECTROMETRY [LARGE SCALE ANALYSIS]</scope>
    <source>
        <tissue>Liver</tissue>
    </source>
</reference>
<reference key="23">
    <citation type="journal article" date="2014" name="Nat. Struct. Mol. Biol.">
        <title>Uncovering global SUMOylation signaling networks in a site-specific manner.</title>
        <authorList>
            <person name="Hendriks I.A."/>
            <person name="D'Souza R.C."/>
            <person name="Yang B."/>
            <person name="Verlaan-de Vries M."/>
            <person name="Mann M."/>
            <person name="Vertegaal A.C."/>
        </authorList>
    </citation>
    <scope>SUMOYLATION [LARGE SCALE ANALYSIS] AT LYS-238</scope>
    <scope>IDENTIFICATION BY MASS SPECTROMETRY [LARGE SCALE ANALYSIS]</scope>
</reference>
<reference key="24">
    <citation type="journal article" date="2014" name="Nat. Commun.">
        <title>PICALM modulates autophagy activity and tau accumulation.</title>
        <authorList>
            <person name="Moreau K."/>
            <person name="Fleming A."/>
            <person name="Imarisio S."/>
            <person name="Lopez Ramirez A."/>
            <person name="Mercer J.L."/>
            <person name="Jimenez-Sanchez M."/>
            <person name="Bento C.F."/>
            <person name="Puri C."/>
            <person name="Zavodszky E."/>
            <person name="Siddiqi F."/>
            <person name="Lavau C.P."/>
            <person name="Betton M."/>
            <person name="O'Kane C.J."/>
            <person name="Wechsler D.S."/>
            <person name="Rubinsztein D.C."/>
        </authorList>
    </citation>
    <scope>FUNCTION</scope>
</reference>
<reference key="25">
    <citation type="journal article" date="2015" name="Dev. Cell">
        <title>CALM regulates clathrin-coated vesicle size and maturation by directly sensing and driving membrane curvature.</title>
        <authorList>
            <person name="Miller S.E."/>
            <person name="Mathiasen S."/>
            <person name="Bright N.A."/>
            <person name="Pierre F."/>
            <person name="Kelly B.T."/>
            <person name="Kladt N."/>
            <person name="Schauss A."/>
            <person name="Merrifield C.J."/>
            <person name="Stamou D."/>
            <person name="Hoening S."/>
            <person name="Owen D.J."/>
        </authorList>
    </citation>
    <scope>FUNCTION</scope>
</reference>
<reference key="26">
    <citation type="journal article" date="2015" name="Proteomics">
        <title>N-terminome analysis of the human mitochondrial proteome.</title>
        <authorList>
            <person name="Vaca Jacome A.S."/>
            <person name="Rabilloud T."/>
            <person name="Schaeffer-Reiss C."/>
            <person name="Rompais M."/>
            <person name="Ayoub D."/>
            <person name="Lane L."/>
            <person name="Bairoch A."/>
            <person name="Van Dorsselaer A."/>
            <person name="Carapito C."/>
        </authorList>
    </citation>
    <scope>IDENTIFICATION BY MASS SPECTROMETRY [LARGE SCALE ANALYSIS]</scope>
</reference>
<reference key="27">
    <citation type="journal article" date="2016" name="PLoS ONE">
        <title>A Novel Sequence in AP180 and CALM Promotes Efficient Clathrin Binding and Assembly.</title>
        <authorList>
            <person name="Moshkanbaryans L."/>
            <person name="Xue J."/>
            <person name="Wark J.R."/>
            <person name="Robinson P.J."/>
            <person name="Graham M.E."/>
        </authorList>
    </citation>
    <scope>FUNCTION</scope>
</reference>
<comment type="function">
    <text evidence="3 4 6 7 8 9 10 11 12">Cytoplasmic adapter protein that plays a critical role in clathrin-mediated endocytosis which is important in processes such as internalization of cell receptors, synaptic transmission or removal of apoptotic cells. Recruits AP-2 and attaches clathrin triskelions to the cytoplasmic side of plasma membrane leading to clathrin-coated vesicles (CCVs) assembly (PubMed:10436022, PubMed:16262731, PubMed:27574975). Furthermore, regulates clathrin-coated vesicle size and maturation by directly sensing and driving membrane curvature (PubMed:25898166). In addition to binding to clathrin, mediates the endocytosis of small R-SNARES (Soluble NSF Attachment Protein REceptors) between plasma membranes and endosomes including VAMP2, VAMP3, VAMP4, VAMP7 or VAMP8 (PubMed:21808019, PubMed:22118466, PubMed:23741335). In turn, PICALM-dependent SNARE endocytosis is required for the formation and maturation of autophagic precursors (PubMed:25241929). Modulates thereby autophagy and the turnover of autophagy substrates such as MAPT/TAU or amyloid precursor protein cleaved C-terminal fragment (APP-CTF) (PubMed:24067654, PubMed:25241929).</text>
</comment>
<comment type="subunit">
    <text evidence="4 5 6 7 8 9">Binds to clathrin; involves primarily the C-terminal sequences, but the full-length protein is required for full binding capacity. Binds phosphatidylinositol 4,5- bisphosphate. Interacts with PIMREG; this interaction may change the subcellular location into the nucleus (PubMed:16491119). Interacts with AP2A1 (via its alpha-appendage domain) (PubMed:16262731). Interacts (via N-terminus) with VAMP2; VAMP3; VAMP7 and VAMP8 (Via N-terminus) (PubMed:21808019, PubMed:22118466, PubMed:23741335). Interacts with LC3/MAP1LC3A (PubMed:24067654).</text>
</comment>
<comment type="interaction">
    <interactant intactId="EBI-2803688">
        <id>Q13492</id>
    </interactant>
    <interactant intactId="EBI-396684">
        <id>P42566</id>
        <label>EPS15</label>
    </interactant>
    <organismsDiffer>false</organismsDiffer>
    <experiments>2</experiments>
</comment>
<comment type="interaction">
    <interactant intactId="EBI-2803688">
        <id>Q13492</id>
    </interactant>
    <interactant intactId="EBI-701903">
        <id>Q14192</id>
        <label>FHL2</label>
    </interactant>
    <organismsDiffer>false</organismsDiffer>
    <experiments>8</experiments>
</comment>
<comment type="interaction">
    <interactant intactId="EBI-11031437">
        <id>Q13492-3</id>
    </interactant>
    <interactant intactId="EBI-930964">
        <id>P54253</id>
        <label>ATXN1</label>
    </interactant>
    <organismsDiffer>false</organismsDiffer>
    <experiments>3</experiments>
</comment>
<comment type="interaction">
    <interactant intactId="EBI-11031437">
        <id>Q13492-3</id>
    </interactant>
    <interactant intactId="EBI-8624731">
        <id>P0C7T5</id>
        <label>ATXN1L</label>
    </interactant>
    <organismsDiffer>false</organismsDiffer>
    <experiments>3</experiments>
</comment>
<comment type="interaction">
    <interactant intactId="EBI-11031437">
        <id>Q13492-3</id>
    </interactant>
    <interactant intactId="EBI-742550">
        <id>Q96K80</id>
        <label>ZC3H10</label>
    </interactant>
    <organismsDiffer>false</organismsDiffer>
    <experiments>3</experiments>
</comment>
<comment type="subcellular location">
    <subcellularLocation>
        <location evidence="4">Cell membrane</location>
    </subcellularLocation>
    <subcellularLocation>
        <location evidence="3">Membrane</location>
        <location evidence="3">Clathrin-coated pit</location>
    </subcellularLocation>
    <subcellularLocation>
        <location evidence="3">Golgi apparatus</location>
    </subcellularLocation>
    <subcellularLocation>
        <location evidence="3">Cytoplasmic vesicle</location>
        <location evidence="3">Clathrin-coated vesicle</location>
    </subcellularLocation>
    <subcellularLocation>
        <location evidence="5">Nucleus</location>
    </subcellularLocation>
    <text evidence="3 5">Colocalized with clathrin in the Golgi area (PubMed:10436022). Interaction with PIMREG may target PICALM to the nucleus in some cells (PubMed:16491119).</text>
</comment>
<comment type="alternative products">
    <event type="alternative splicing"/>
    <isoform>
        <id>Q13492-1</id>
        <name>1</name>
        <name>Type I</name>
        <sequence type="displayed"/>
    </isoform>
    <isoform>
        <id>Q13492-2</id>
        <name>2</name>
        <name>Type II</name>
        <sequence type="described" ref="VSP_004067"/>
    </isoform>
    <isoform>
        <id>Q13492-3</id>
        <name>3</name>
        <sequence type="described" ref="VSP_009607 VSP_009608"/>
    </isoform>
    <isoform>
        <id>Q13492-4</id>
        <name>4</name>
        <sequence type="described" ref="VSP_044567 VSP_009607"/>
    </isoform>
    <isoform>
        <id>Q13492-5</id>
        <name>5</name>
        <sequence type="described" ref="VSP_044568"/>
    </isoform>
</comment>
<comment type="tissue specificity">
    <text evidence="13">Expressed in all tissues examined.</text>
</comment>
<comment type="disease">
    <text evidence="13">A chromosomal aberration involving PICALM is found in diffuse histiocytic lymphomas. Translocation t(10;11)(p13;q14) with MLLT10.</text>
</comment>
<comment type="similarity">
    <text evidence="19">Belongs to the PICALM/SNAP91 family.</text>
</comment>
<comment type="sequence caution" evidence="19">
    <conflict type="erroneous initiation">
        <sequence resource="EMBL-CDS" id="BAE06099"/>
    </conflict>
    <text>Extended N-terminus.</text>
</comment>
<comment type="online information" name="Atlas of Genetics and Cytogenetics in Oncology and Haematology">
    <link uri="https://atlasgeneticsoncology.org/gene/64/CALM"/>
</comment>
<name>PICAL_HUMAN</name>
<sequence length="652" mass="70755">MSGQSLTDRITAAQHSVTGSAVSKTVCKATTHEIMGPKKKHLDYLIQCTNEMNVNIPQLADSLFERTTNSSWVVVFKSLITTHHLMVYGNERFIQYLASRNTLFNLSNFLDKSGLQGYDMSTFIRRYSRYLNEKAVSYRQVAFDFTKVKRGADGVMRTMNTEKLLKTVPIIQNQMDALLDFNVNSNELTNGVINAAFMLLFKDAIRLFAAYNEGIINLLEKYFDMKKNQCKEGLDIYKKFLTRMTRISEFLKVAEQVGIDRGDIPDLSQAPSSLLDALEQHLASLEGKKIKDSTAASRATTLSNAVSSLASTGLSLTKVDEREKQAALEEEQARLKALKEQRLKELAKKPHTSLTTAASPVSTSAGGIMTAPAIDIFSTPSSSNSTSKLPNDLLDLQQPTFHPSVHPMSTASQVASTWGDPFSATVDAVDDAIPSLNPFLTKSSGDVHLSISSDVSTFTTRTPTHEMFVGFTPSPVAQPHPSAGLNVDFESVFGNKSTNVIVDSGGFDELGGLLKPTVASQNQNLPVAKLPPSKLVSDDLDSSLANLVGNLGIGNGTTKNDVNWSQPGEKKLTGGSNWQPKVAPTTAWNAATMAPPVMAYPATTPTGMIGYGIPPQMGSVPVMTQPTLIYSQPVMRPPNPFGPVSGAQIQFM</sequence>
<proteinExistence type="evidence at protein level"/>